<dbReference type="EC" id="3.2.1.28" evidence="1"/>
<dbReference type="EMBL" id="AP009240">
    <property type="protein sequence ID" value="BAG79312.1"/>
    <property type="molecule type" value="Genomic_DNA"/>
</dbReference>
<dbReference type="RefSeq" id="WP_000934218.1">
    <property type="nucleotide sequence ID" value="NC_011415.1"/>
</dbReference>
<dbReference type="SMR" id="B6I385"/>
<dbReference type="CAZy" id="GH37">
    <property type="family name" value="Glycoside Hydrolase Family 37"/>
</dbReference>
<dbReference type="KEGG" id="ecy:ECSE_3788"/>
<dbReference type="HOGENOM" id="CLU_006451_3_1_6"/>
<dbReference type="UniPathway" id="UPA00300">
    <property type="reaction ID" value="UER00535"/>
</dbReference>
<dbReference type="Proteomes" id="UP000008199">
    <property type="component" value="Chromosome"/>
</dbReference>
<dbReference type="GO" id="GO:0005737">
    <property type="term" value="C:cytoplasm"/>
    <property type="evidence" value="ECO:0007669"/>
    <property type="project" value="UniProtKB-SubCell"/>
</dbReference>
<dbReference type="GO" id="GO:0004555">
    <property type="term" value="F:alpha,alpha-trehalase activity"/>
    <property type="evidence" value="ECO:0007669"/>
    <property type="project" value="UniProtKB-UniRule"/>
</dbReference>
<dbReference type="GO" id="GO:0071474">
    <property type="term" value="P:cellular hyperosmotic response"/>
    <property type="evidence" value="ECO:0007669"/>
    <property type="project" value="InterPro"/>
</dbReference>
<dbReference type="GO" id="GO:0005993">
    <property type="term" value="P:trehalose catabolic process"/>
    <property type="evidence" value="ECO:0007669"/>
    <property type="project" value="UniProtKB-UniRule"/>
</dbReference>
<dbReference type="FunFam" id="1.50.10.10:FF:000003">
    <property type="entry name" value="Cytoplasmic trehalase"/>
    <property type="match status" value="1"/>
</dbReference>
<dbReference type="Gene3D" id="1.50.10.10">
    <property type="match status" value="1"/>
</dbReference>
<dbReference type="HAMAP" id="MF_01059">
    <property type="entry name" value="Cyt_trehalase"/>
    <property type="match status" value="1"/>
</dbReference>
<dbReference type="InterPro" id="IPR008928">
    <property type="entry name" value="6-hairpin_glycosidase_sf"/>
</dbReference>
<dbReference type="InterPro" id="IPR012341">
    <property type="entry name" value="6hp_glycosidase-like_sf"/>
</dbReference>
<dbReference type="InterPro" id="IPR023715">
    <property type="entry name" value="Cyt_trehalase"/>
</dbReference>
<dbReference type="InterPro" id="IPR001661">
    <property type="entry name" value="Glyco_hydro_37"/>
</dbReference>
<dbReference type="InterPro" id="IPR018232">
    <property type="entry name" value="Glyco_hydro_37_CS"/>
</dbReference>
<dbReference type="NCBIfam" id="NF009773">
    <property type="entry name" value="PRK13270.1"/>
    <property type="match status" value="1"/>
</dbReference>
<dbReference type="NCBIfam" id="NF009774">
    <property type="entry name" value="PRK13271.1"/>
    <property type="match status" value="1"/>
</dbReference>
<dbReference type="PANTHER" id="PTHR23403:SF8">
    <property type="entry name" value="CYTOPLASMIC TREHALASE"/>
    <property type="match status" value="1"/>
</dbReference>
<dbReference type="PANTHER" id="PTHR23403">
    <property type="entry name" value="TREHALASE"/>
    <property type="match status" value="1"/>
</dbReference>
<dbReference type="Pfam" id="PF01204">
    <property type="entry name" value="Trehalase"/>
    <property type="match status" value="1"/>
</dbReference>
<dbReference type="PRINTS" id="PR00744">
    <property type="entry name" value="GLHYDRLASE37"/>
</dbReference>
<dbReference type="SUPFAM" id="SSF48208">
    <property type="entry name" value="Six-hairpin glycosidases"/>
    <property type="match status" value="1"/>
</dbReference>
<dbReference type="PROSITE" id="PS00927">
    <property type="entry name" value="TREHALASE_1"/>
    <property type="match status" value="1"/>
</dbReference>
<dbReference type="PROSITE" id="PS00928">
    <property type="entry name" value="TREHALASE_2"/>
    <property type="match status" value="1"/>
</dbReference>
<keyword id="KW-0963">Cytoplasm</keyword>
<keyword id="KW-0326">Glycosidase</keyword>
<keyword id="KW-0378">Hydrolase</keyword>
<reference key="1">
    <citation type="journal article" date="2008" name="DNA Res.">
        <title>Complete genome sequence and comparative analysis of the wild-type commensal Escherichia coli strain SE11 isolated from a healthy adult.</title>
        <authorList>
            <person name="Oshima K."/>
            <person name="Toh H."/>
            <person name="Ogura Y."/>
            <person name="Sasamoto H."/>
            <person name="Morita H."/>
            <person name="Park S.-H."/>
            <person name="Ooka T."/>
            <person name="Iyoda S."/>
            <person name="Taylor T.D."/>
            <person name="Hayashi T."/>
            <person name="Itoh K."/>
            <person name="Hattori M."/>
        </authorList>
    </citation>
    <scope>NUCLEOTIDE SEQUENCE [LARGE SCALE GENOMIC DNA]</scope>
    <source>
        <strain>SE11</strain>
    </source>
</reference>
<proteinExistence type="inferred from homology"/>
<organism>
    <name type="scientific">Escherichia coli (strain SE11)</name>
    <dbReference type="NCBI Taxonomy" id="409438"/>
    <lineage>
        <taxon>Bacteria</taxon>
        <taxon>Pseudomonadati</taxon>
        <taxon>Pseudomonadota</taxon>
        <taxon>Gammaproteobacteria</taxon>
        <taxon>Enterobacterales</taxon>
        <taxon>Enterobacteriaceae</taxon>
        <taxon>Escherichia</taxon>
    </lineage>
</organism>
<protein>
    <recommendedName>
        <fullName evidence="1">Cytoplasmic trehalase</fullName>
        <ecNumber evidence="1">3.2.1.28</ecNumber>
    </recommendedName>
    <alternativeName>
        <fullName evidence="1">Alpha,alpha-trehalase</fullName>
    </alternativeName>
    <alternativeName>
        <fullName evidence="1">Alpha,alpha-trehalose glucohydrolase</fullName>
    </alternativeName>
</protein>
<name>TREF_ECOSE</name>
<sequence length="549" mass="63715">MLNQKIQNPNPDELMIEVDLCYELDPYELKLDEMIEAEPEPEMIEGLPASDALTPADRYLELFEHVQSAKIFPDSKTFPDCAPKMDPLDILIRYRKVRRHRDFDLRKFVENHFWLPEVYSSEYVSDPQNSLKEHIDQLWPVLTREPQDHIPWSSLLALPQSYIVPGGRFSETYYWDSYFTMLGLAESGREDLLKCMADNFAWMIENYGHIPNGNRTYYLSRSQPPVFALMVELFEEDGVRGARRYLDHLKMEYAFWMDGAESLIPNQAYRHVVRMPDGSLLNRYWDDRDTPRDESWLEDVETAKHSGRPPNEVYRDLRAGAASGWDYSSRWLRDTGRLASIRTTQFIPIDLNAFLFKLESAIANISALKGEKETEALFRQKASARRDAVNRYLWDDENGIYRDYDWRREQLALFSAAAIVPLYVGMANHEQADRLANAVRSRLLTPGGILASEYETGEQWDKPNGWAPLQWMAIQGFKMYGDDLLGDEIARSWLKTVNQFYLEQHKMIEKYHIADGVPREGGGGEYPLQDGFGWTNGVVRRLIGLYGEP</sequence>
<feature type="chain" id="PRO_1000136405" description="Cytoplasmic trehalase">
    <location>
        <begin position="1"/>
        <end position="549"/>
    </location>
</feature>
<feature type="active site" description="Proton donor/acceptor" evidence="1">
    <location>
        <position position="326"/>
    </location>
</feature>
<feature type="active site" description="Proton donor/acceptor" evidence="1">
    <location>
        <position position="509"/>
    </location>
</feature>
<feature type="binding site" evidence="1">
    <location>
        <position position="168"/>
    </location>
    <ligand>
        <name>substrate</name>
    </ligand>
</feature>
<feature type="binding site" evidence="1">
    <location>
        <begin position="175"/>
        <end position="176"/>
    </location>
    <ligand>
        <name>substrate</name>
    </ligand>
</feature>
<feature type="binding site" evidence="1">
    <location>
        <position position="212"/>
    </location>
    <ligand>
        <name>substrate</name>
    </ligand>
</feature>
<feature type="binding site" evidence="1">
    <location>
        <begin position="221"/>
        <end position="223"/>
    </location>
    <ligand>
        <name>substrate</name>
    </ligand>
</feature>
<feature type="binding site" evidence="1">
    <location>
        <begin position="292"/>
        <end position="294"/>
    </location>
    <ligand>
        <name>substrate</name>
    </ligand>
</feature>
<feature type="binding site" evidence="1">
    <location>
        <position position="324"/>
    </location>
    <ligand>
        <name>substrate</name>
    </ligand>
</feature>
<feature type="binding site" evidence="1">
    <location>
        <position position="525"/>
    </location>
    <ligand>
        <name>substrate</name>
    </ligand>
</feature>
<evidence type="ECO:0000255" key="1">
    <source>
        <dbReference type="HAMAP-Rule" id="MF_01059"/>
    </source>
</evidence>
<comment type="function">
    <text evidence="1">Hydrolyzes trehalose to glucose. Could be involved, in cells returning to low osmolarity conditions, in the utilization of the accumulated cytoplasmic trehalose, which was synthesized in response to high osmolarity.</text>
</comment>
<comment type="catalytic activity">
    <reaction evidence="1">
        <text>alpha,alpha-trehalose + H2O = alpha-D-glucose + beta-D-glucose</text>
        <dbReference type="Rhea" id="RHEA:32675"/>
        <dbReference type="ChEBI" id="CHEBI:15377"/>
        <dbReference type="ChEBI" id="CHEBI:15903"/>
        <dbReference type="ChEBI" id="CHEBI:16551"/>
        <dbReference type="ChEBI" id="CHEBI:17925"/>
        <dbReference type="EC" id="3.2.1.28"/>
    </reaction>
</comment>
<comment type="pathway">
    <text evidence="1">Glycan degradation; trehalose degradation; D-glucose from alpha,alpha-trehalose: step 1/1.</text>
</comment>
<comment type="subunit">
    <text evidence="1">Monomer.</text>
</comment>
<comment type="subcellular location">
    <subcellularLocation>
        <location evidence="1">Cytoplasm</location>
    </subcellularLocation>
</comment>
<comment type="similarity">
    <text evidence="1">Belongs to the glycosyl hydrolase 37 family.</text>
</comment>
<gene>
    <name evidence="1" type="primary">treF</name>
    <name type="ordered locus">ECSE_3788</name>
</gene>
<accession>B6I385</accession>